<accession>Q01290</accession>
<accession>Q7RV48</accession>
<sequence>MAPKQDTPFRSADMSMVQLYISNEIGREVCNALGELGLVHFRDLNSELSAFQRAFTQDIRRLDNVERQLRYFHSQMEKAGIPLRKFDPDVDILTPPTTTEIDELAERAQTLEQRVSSLNESYETLKKREVELTEWRWVLREAGGFFDRAHGNVEEIRASTDNDDAPLLQDVEQHNTAADVERSFSGMNIGFVAGVIGRDRVDAFERILWRTLRGNLYMNQAEIPEPLIDPTINEPVLKNVFVIFAHGKEILAKIRRISESMGAEVYNVDEHSDLRRDQVHEVNARLEDVQNVLRNTQQTLEAELAQISQSLSAWMITISKEKAVYNTLNLFSYDRARRTLIAEGWCPTNDLPLIRSTLQDVNNRAGLSVPSIINEIRTNKTPPTYLKTNKFTEAFQTIVNAYGTATYQEVNPAIPVIVTFPFLFAVMFGDFGHALIMLCAALAMIYWEKPLKKVTFELFAMVFYGRYIVLVMAVFSVYTGLIYNDVFSKSMTLFDSQWKWVVPENFKEGMTVKAVLREPNGYRYPFGLDWRWHGTENELLFINSYKMKMAIILGWAHMTYSLCFSYINARHFKRPIDIWGNFVPGMIFFQSIFGYLVLCIIYKWSVDWFGTGRQPPGLLNMLIYMFLQPGTLDGGVELYPGQATVQVILLLLAVIQVPILLFLKPFYLRWENNRARAKGYRGIGERSRVSALDEDDEEDPSNGDDYEGAAMLTHDEHGDGEHEEFEFGEVMIHQVIHTIEFCLNSVSHTASYLRLWALSLAHQQLSAVLWSMTMAKALESKGLGGAIFLVVAFAMFFVLSVIILIIMEGVSAMLHSLRLAWVESFSKFAEFGGWPFTPFSFKQQLEESEELKEYIG</sequence>
<reference key="1">
    <citation type="submission" date="1995-09" db="EMBL/GenBank/DDBJ databases">
        <authorList>
            <person name="Bowman E.J."/>
        </authorList>
    </citation>
    <scope>NUCLEOTIDE SEQUENCE [GENOMIC DNA]</scope>
    <source>
        <strain>ATCC 24698 / 74-OR23-1A / CBS 708.71 / DSM 1257 / FGSC 987</strain>
    </source>
</reference>
<reference key="2">
    <citation type="journal article" date="2003" name="Nucleic Acids Res.">
        <title>What's in the genome of a filamentous fungus? Analysis of the Neurospora genome sequence.</title>
        <authorList>
            <person name="Mannhaupt G."/>
            <person name="Montrone C."/>
            <person name="Haase D."/>
            <person name="Mewes H.-W."/>
            <person name="Aign V."/>
            <person name="Hoheisel J.D."/>
            <person name="Fartmann B."/>
            <person name="Nyakatura G."/>
            <person name="Kempken F."/>
            <person name="Maier J."/>
            <person name="Schulte U."/>
        </authorList>
    </citation>
    <scope>NUCLEOTIDE SEQUENCE [LARGE SCALE GENOMIC DNA]</scope>
    <source>
        <strain>ATCC 24698 / 74-OR23-1A / CBS 708.71 / DSM 1257 / FGSC 987</strain>
    </source>
</reference>
<reference key="3">
    <citation type="journal article" date="2003" name="Nature">
        <title>The genome sequence of the filamentous fungus Neurospora crassa.</title>
        <authorList>
            <person name="Galagan J.E."/>
            <person name="Calvo S.E."/>
            <person name="Borkovich K.A."/>
            <person name="Selker E.U."/>
            <person name="Read N.D."/>
            <person name="Jaffe D.B."/>
            <person name="FitzHugh W."/>
            <person name="Ma L.-J."/>
            <person name="Smirnov S."/>
            <person name="Purcell S."/>
            <person name="Rehman B."/>
            <person name="Elkins T."/>
            <person name="Engels R."/>
            <person name="Wang S."/>
            <person name="Nielsen C.B."/>
            <person name="Butler J."/>
            <person name="Endrizzi M."/>
            <person name="Qui D."/>
            <person name="Ianakiev P."/>
            <person name="Bell-Pedersen D."/>
            <person name="Nelson M.A."/>
            <person name="Werner-Washburne M."/>
            <person name="Selitrennikoff C.P."/>
            <person name="Kinsey J.A."/>
            <person name="Braun E.L."/>
            <person name="Zelter A."/>
            <person name="Schulte U."/>
            <person name="Kothe G.O."/>
            <person name="Jedd G."/>
            <person name="Mewes H.-W."/>
            <person name="Staben C."/>
            <person name="Marcotte E."/>
            <person name="Greenberg D."/>
            <person name="Roy A."/>
            <person name="Foley K."/>
            <person name="Naylor J."/>
            <person name="Stange-Thomann N."/>
            <person name="Barrett R."/>
            <person name="Gnerre S."/>
            <person name="Kamal M."/>
            <person name="Kamvysselis M."/>
            <person name="Mauceli E.W."/>
            <person name="Bielke C."/>
            <person name="Rudd S."/>
            <person name="Frishman D."/>
            <person name="Krystofova S."/>
            <person name="Rasmussen C."/>
            <person name="Metzenberg R.L."/>
            <person name="Perkins D.D."/>
            <person name="Kroken S."/>
            <person name="Cogoni C."/>
            <person name="Macino G."/>
            <person name="Catcheside D.E.A."/>
            <person name="Li W."/>
            <person name="Pratt R.J."/>
            <person name="Osmani S.A."/>
            <person name="DeSouza C.P.C."/>
            <person name="Glass N.L."/>
            <person name="Orbach M.J."/>
            <person name="Berglund J.A."/>
            <person name="Voelker R."/>
            <person name="Yarden O."/>
            <person name="Plamann M."/>
            <person name="Seiler S."/>
            <person name="Dunlap J.C."/>
            <person name="Radford A."/>
            <person name="Aramayo R."/>
            <person name="Natvig D.O."/>
            <person name="Alex L.A."/>
            <person name="Mannhaupt G."/>
            <person name="Ebbole D.J."/>
            <person name="Freitag M."/>
            <person name="Paulsen I."/>
            <person name="Sachs M.S."/>
            <person name="Lander E.S."/>
            <person name="Nusbaum C."/>
            <person name="Birren B.W."/>
        </authorList>
    </citation>
    <scope>NUCLEOTIDE SEQUENCE [LARGE SCALE GENOMIC DNA]</scope>
    <source>
        <strain>ATCC 24698 / 74-OR23-1A / CBS 708.71 / DSM 1257 / FGSC 987</strain>
    </source>
</reference>
<evidence type="ECO:0000250" key="1">
    <source>
        <dbReference type="UniProtKB" id="P32563"/>
    </source>
</evidence>
<evidence type="ECO:0000255" key="2"/>
<evidence type="ECO:0000256" key="3">
    <source>
        <dbReference type="SAM" id="MobiDB-lite"/>
    </source>
</evidence>
<evidence type="ECO:0000305" key="4"/>
<feature type="chain" id="PRO_0000119222" description="V-type proton ATPase subunit a">
    <location>
        <begin position="1"/>
        <end position="856"/>
    </location>
</feature>
<feature type="topological domain" description="Cytoplasmic" evidence="2">
    <location>
        <begin position="1"/>
        <end position="409"/>
    </location>
</feature>
<feature type="transmembrane region" description="Helical" evidence="2">
    <location>
        <begin position="410"/>
        <end position="428"/>
    </location>
</feature>
<feature type="topological domain" description="Vacuolar" evidence="2">
    <location>
        <begin position="429"/>
        <end position="430"/>
    </location>
</feature>
<feature type="transmembrane region" description="Helical" evidence="2">
    <location>
        <begin position="431"/>
        <end position="447"/>
    </location>
</feature>
<feature type="topological domain" description="Cytoplasmic" evidence="2">
    <location>
        <begin position="448"/>
        <end position="460"/>
    </location>
</feature>
<feature type="transmembrane region" description="Helical" evidence="2">
    <location>
        <begin position="461"/>
        <end position="490"/>
    </location>
</feature>
<feature type="topological domain" description="Vacuolar" evidence="2">
    <location>
        <begin position="491"/>
        <end position="544"/>
    </location>
</feature>
<feature type="transmembrane region" description="Helical" evidence="2">
    <location>
        <begin position="545"/>
        <end position="564"/>
    </location>
</feature>
<feature type="topological domain" description="Cytoplasmic" evidence="2">
    <location>
        <begin position="565"/>
        <end position="582"/>
    </location>
</feature>
<feature type="transmembrane region" description="Helical" evidence="2">
    <location>
        <begin position="583"/>
        <end position="603"/>
    </location>
</feature>
<feature type="topological domain" description="Vacuolar" evidence="2">
    <location>
        <begin position="604"/>
        <end position="648"/>
    </location>
</feature>
<feature type="transmembrane region" description="Helical" evidence="2">
    <location>
        <begin position="649"/>
        <end position="668"/>
    </location>
</feature>
<feature type="topological domain" description="Cytoplasmic" evidence="2">
    <location>
        <begin position="669"/>
        <end position="738"/>
    </location>
</feature>
<feature type="transmembrane region" description="Helical" evidence="2">
    <location>
        <begin position="739"/>
        <end position="763"/>
    </location>
</feature>
<feature type="topological domain" description="Vacuolar" evidence="2">
    <location>
        <begin position="764"/>
        <end position="784"/>
    </location>
</feature>
<feature type="transmembrane region" description="Helical" evidence="2">
    <location>
        <begin position="785"/>
        <end position="823"/>
    </location>
</feature>
<feature type="topological domain" description="Cytoplasmic" evidence="2">
    <location>
        <begin position="824"/>
        <end position="856"/>
    </location>
</feature>
<feature type="region of interest" description="Disordered" evidence="3">
    <location>
        <begin position="689"/>
        <end position="710"/>
    </location>
</feature>
<feature type="compositionally biased region" description="Acidic residues" evidence="3">
    <location>
        <begin position="692"/>
        <end position="707"/>
    </location>
</feature>
<gene>
    <name type="primary">vph-1</name>
    <name type="synonym">vph1</name>
    <name type="ORF">B8J24.100</name>
    <name type="ORF">NCU03463</name>
</gene>
<dbReference type="EMBL" id="U36396">
    <property type="protein sequence ID" value="AAA93078.1"/>
    <property type="molecule type" value="Genomic_DNA"/>
</dbReference>
<dbReference type="EMBL" id="AL669990">
    <property type="protein sequence ID" value="CAD21112.1"/>
    <property type="molecule type" value="Genomic_DNA"/>
</dbReference>
<dbReference type="EMBL" id="CM002237">
    <property type="protein sequence ID" value="EAA26818.1"/>
    <property type="molecule type" value="Genomic_DNA"/>
</dbReference>
<dbReference type="RefSeq" id="XP_956054.1">
    <property type="nucleotide sequence ID" value="XM_950961.2"/>
</dbReference>
<dbReference type="SMR" id="Q01290"/>
<dbReference type="FunCoup" id="Q01290">
    <property type="interactions" value="386"/>
</dbReference>
<dbReference type="STRING" id="367110.Q01290"/>
<dbReference type="PaxDb" id="5141-EFNCRP00000002737"/>
<dbReference type="EnsemblFungi" id="EAA26818">
    <property type="protein sequence ID" value="EAA26818"/>
    <property type="gene ID" value="NCU03463"/>
</dbReference>
<dbReference type="GeneID" id="3872192"/>
<dbReference type="KEGG" id="ncr:NCU03463"/>
<dbReference type="VEuPathDB" id="FungiDB:NCU03463"/>
<dbReference type="HOGENOM" id="CLU_005230_0_0_1"/>
<dbReference type="InParanoid" id="Q01290"/>
<dbReference type="OMA" id="FYLWFFL"/>
<dbReference type="OrthoDB" id="10264220at2759"/>
<dbReference type="Proteomes" id="UP000001805">
    <property type="component" value="Chromosome 6, Linkage Group II"/>
</dbReference>
<dbReference type="GO" id="GO:0000329">
    <property type="term" value="C:fungal-type vacuole membrane"/>
    <property type="evidence" value="ECO:0000318"/>
    <property type="project" value="GO_Central"/>
</dbReference>
<dbReference type="GO" id="GO:0016471">
    <property type="term" value="C:vacuolar proton-transporting V-type ATPase complex"/>
    <property type="evidence" value="ECO:0000318"/>
    <property type="project" value="GO_Central"/>
</dbReference>
<dbReference type="GO" id="GO:0000220">
    <property type="term" value="C:vacuolar proton-transporting V-type ATPase, V0 domain"/>
    <property type="evidence" value="ECO:0007669"/>
    <property type="project" value="InterPro"/>
</dbReference>
<dbReference type="GO" id="GO:0051117">
    <property type="term" value="F:ATPase binding"/>
    <property type="evidence" value="ECO:0000318"/>
    <property type="project" value="GO_Central"/>
</dbReference>
<dbReference type="GO" id="GO:0046961">
    <property type="term" value="F:proton-transporting ATPase activity, rotational mechanism"/>
    <property type="evidence" value="ECO:0007669"/>
    <property type="project" value="InterPro"/>
</dbReference>
<dbReference type="GO" id="GO:0007035">
    <property type="term" value="P:vacuolar acidification"/>
    <property type="evidence" value="ECO:0000318"/>
    <property type="project" value="GO_Central"/>
</dbReference>
<dbReference type="InterPro" id="IPR002490">
    <property type="entry name" value="V-ATPase_116kDa_su"/>
</dbReference>
<dbReference type="InterPro" id="IPR026028">
    <property type="entry name" value="V-type_ATPase_116kDa_su_euka"/>
</dbReference>
<dbReference type="PANTHER" id="PTHR11629:SF63">
    <property type="entry name" value="V-TYPE PROTON ATPASE SUBUNIT A"/>
    <property type="match status" value="1"/>
</dbReference>
<dbReference type="PANTHER" id="PTHR11629">
    <property type="entry name" value="VACUOLAR PROTON ATPASES"/>
    <property type="match status" value="1"/>
</dbReference>
<dbReference type="Pfam" id="PF01496">
    <property type="entry name" value="V_ATPase_I"/>
    <property type="match status" value="1"/>
</dbReference>
<dbReference type="PIRSF" id="PIRSF001293">
    <property type="entry name" value="ATP6V0A1"/>
    <property type="match status" value="1"/>
</dbReference>
<name>VPP1_NEUCR</name>
<organism>
    <name type="scientific">Neurospora crassa (strain ATCC 24698 / 74-OR23-1A / CBS 708.71 / DSM 1257 / FGSC 987)</name>
    <dbReference type="NCBI Taxonomy" id="367110"/>
    <lineage>
        <taxon>Eukaryota</taxon>
        <taxon>Fungi</taxon>
        <taxon>Dikarya</taxon>
        <taxon>Ascomycota</taxon>
        <taxon>Pezizomycotina</taxon>
        <taxon>Sordariomycetes</taxon>
        <taxon>Sordariomycetidae</taxon>
        <taxon>Sordariales</taxon>
        <taxon>Sordariaceae</taxon>
        <taxon>Neurospora</taxon>
    </lineage>
</organism>
<proteinExistence type="inferred from homology"/>
<protein>
    <recommendedName>
        <fullName>V-type proton ATPase subunit a</fullName>
        <shortName>V-ATPase a subunit</shortName>
    </recommendedName>
    <alternativeName>
        <fullName>Vacuolar ATPase 98 kDa subunit</fullName>
    </alternativeName>
    <alternativeName>
        <fullName>Vacuolar proton pump a subunit</fullName>
    </alternativeName>
    <alternativeName>
        <fullName>Vacuolar proton translocating ATPase subunit a</fullName>
    </alternativeName>
</protein>
<keyword id="KW-0375">Hydrogen ion transport</keyword>
<keyword id="KW-0406">Ion transport</keyword>
<keyword id="KW-0472">Membrane</keyword>
<keyword id="KW-1185">Reference proteome</keyword>
<keyword id="KW-0812">Transmembrane</keyword>
<keyword id="KW-1133">Transmembrane helix</keyword>
<keyword id="KW-0813">Transport</keyword>
<keyword id="KW-0926">Vacuole</keyword>
<comment type="function">
    <text evidence="1">Subunit of the V0 complex of vacuolar(H+)-ATPase (V-ATPase), a multisubunit enzyme composed of a peripheral complex (V1) that hydrolyzes ATP and a membrane integral complex (V0) that translocates protons (By similarity). V-ATPase is responsible for acidifying and maintaining the pH of intracellular compartments (By similarity).</text>
</comment>
<comment type="subunit">
    <text evidence="1">V-ATPase is a heteromultimeric enzyme composed of a peripheral catalytic V1 complex (components A to H) attached to an integral membrane V0 proton pore complex (components: a, c, c', c'', d, e, f and VOA1).</text>
</comment>
<comment type="subcellular location">
    <subcellularLocation>
        <location evidence="1">Vacuole membrane</location>
        <topology evidence="2">Multi-pass membrane protein</topology>
    </subcellularLocation>
</comment>
<comment type="similarity">
    <text evidence="4">Belongs to the V-ATPase 116 kDa subunit family.</text>
</comment>